<name>POLC4_BETPN</name>
<protein>
    <recommendedName>
        <fullName>Polcalcin Bet v 4</fullName>
    </recommendedName>
    <alternativeName>
        <fullName>Calcium-binding pollen allergen Bet v 4</fullName>
    </alternativeName>
    <allergenName>Bet v 4</allergenName>
</protein>
<sequence>MADDHPQDKAERERIFKRFDANGDGKISAAELGEALKTLGSITPDEVKHMMAEIDTDGDGFISFQEFTDFGRANRGLLKDVAKIF</sequence>
<keyword id="KW-0002">3D-structure</keyword>
<keyword id="KW-0020">Allergen</keyword>
<keyword id="KW-0106">Calcium</keyword>
<keyword id="KW-0479">Metal-binding</keyword>
<keyword id="KW-0677">Repeat</keyword>
<proteinExistence type="evidence at protein level"/>
<organism>
    <name type="scientific">Betula pendula</name>
    <name type="common">European white birch</name>
    <name type="synonym">Betula verrucosa</name>
    <dbReference type="NCBI Taxonomy" id="3505"/>
    <lineage>
        <taxon>Eukaryota</taxon>
        <taxon>Viridiplantae</taxon>
        <taxon>Streptophyta</taxon>
        <taxon>Embryophyta</taxon>
        <taxon>Tracheophyta</taxon>
        <taxon>Spermatophyta</taxon>
        <taxon>Magnoliopsida</taxon>
        <taxon>eudicotyledons</taxon>
        <taxon>Gunneridae</taxon>
        <taxon>Pentapetalae</taxon>
        <taxon>rosids</taxon>
        <taxon>fabids</taxon>
        <taxon>Fagales</taxon>
        <taxon>Betulaceae</taxon>
        <taxon>Betula</taxon>
    </lineage>
</organism>
<feature type="chain" id="PRO_0000073666" description="Polcalcin Bet v 4">
    <location>
        <begin position="1"/>
        <end position="85"/>
    </location>
</feature>
<feature type="domain" description="EF-hand 1" evidence="1">
    <location>
        <begin position="7"/>
        <end position="42"/>
    </location>
</feature>
<feature type="domain" description="EF-hand 2" evidence="1">
    <location>
        <begin position="42"/>
        <end position="77"/>
    </location>
</feature>
<feature type="binding site" evidence="1">
    <location>
        <position position="20"/>
    </location>
    <ligand>
        <name>Ca(2+)</name>
        <dbReference type="ChEBI" id="CHEBI:29108"/>
        <label>1</label>
    </ligand>
</feature>
<feature type="binding site" evidence="1">
    <location>
        <position position="22"/>
    </location>
    <ligand>
        <name>Ca(2+)</name>
        <dbReference type="ChEBI" id="CHEBI:29108"/>
        <label>1</label>
    </ligand>
</feature>
<feature type="binding site" evidence="1">
    <location>
        <position position="24"/>
    </location>
    <ligand>
        <name>Ca(2+)</name>
        <dbReference type="ChEBI" id="CHEBI:29108"/>
        <label>1</label>
    </ligand>
</feature>
<feature type="binding site" evidence="1">
    <location>
        <position position="26"/>
    </location>
    <ligand>
        <name>Ca(2+)</name>
        <dbReference type="ChEBI" id="CHEBI:29108"/>
        <label>1</label>
    </ligand>
</feature>
<feature type="binding site" evidence="1">
    <location>
        <position position="31"/>
    </location>
    <ligand>
        <name>Ca(2+)</name>
        <dbReference type="ChEBI" id="CHEBI:29108"/>
        <label>1</label>
    </ligand>
</feature>
<feature type="binding site" evidence="1">
    <location>
        <position position="55"/>
    </location>
    <ligand>
        <name>Ca(2+)</name>
        <dbReference type="ChEBI" id="CHEBI:29108"/>
        <label>2</label>
    </ligand>
</feature>
<feature type="binding site" evidence="1">
    <location>
        <position position="57"/>
    </location>
    <ligand>
        <name>Ca(2+)</name>
        <dbReference type="ChEBI" id="CHEBI:29108"/>
        <label>2</label>
    </ligand>
</feature>
<feature type="binding site" evidence="1">
    <location>
        <position position="59"/>
    </location>
    <ligand>
        <name>Ca(2+)</name>
        <dbReference type="ChEBI" id="CHEBI:29108"/>
        <label>2</label>
    </ligand>
</feature>
<feature type="binding site" evidence="1">
    <location>
        <position position="66"/>
    </location>
    <ligand>
        <name>Ca(2+)</name>
        <dbReference type="ChEBI" id="CHEBI:29108"/>
        <label>2</label>
    </ligand>
</feature>
<feature type="sequence conflict" description="In Ref. 2; CAA73147." evidence="3" ref="2">
    <original>G</original>
    <variation>A</variation>
    <location>
        <position position="71"/>
    </location>
</feature>
<feature type="helix" evidence="4">
    <location>
        <begin position="6"/>
        <end position="19"/>
    </location>
</feature>
<feature type="strand" evidence="4">
    <location>
        <begin position="24"/>
        <end position="27"/>
    </location>
</feature>
<feature type="helix" evidence="4">
    <location>
        <begin position="29"/>
        <end position="36"/>
    </location>
</feature>
<feature type="helix" evidence="4">
    <location>
        <begin position="37"/>
        <end position="39"/>
    </location>
</feature>
<feature type="helix" evidence="4">
    <location>
        <begin position="44"/>
        <end position="54"/>
    </location>
</feature>
<feature type="helix" evidence="4">
    <location>
        <begin position="64"/>
        <end position="73"/>
    </location>
</feature>
<feature type="helix" evidence="4">
    <location>
        <begin position="75"/>
        <end position="84"/>
    </location>
</feature>
<comment type="subunit">
    <text evidence="2">Monomer.</text>
</comment>
<comment type="allergen">
    <text>Causes an allergic reaction in human.</text>
</comment>
<dbReference type="EMBL" id="X87153">
    <property type="protein sequence ID" value="CAA60628.1"/>
    <property type="molecule type" value="mRNA"/>
</dbReference>
<dbReference type="EMBL" id="Y12560">
    <property type="protein sequence ID" value="CAA73147.1"/>
    <property type="molecule type" value="mRNA"/>
</dbReference>
<dbReference type="PIR" id="JC5711">
    <property type="entry name" value="JC5711"/>
</dbReference>
<dbReference type="PIR" id="S54819">
    <property type="entry name" value="S54819"/>
</dbReference>
<dbReference type="PDB" id="1H4B">
    <property type="method" value="NMR"/>
    <property type="chains" value="A=2-85"/>
</dbReference>
<dbReference type="PDBsum" id="1H4B"/>
<dbReference type="SMR" id="Q39419"/>
<dbReference type="MINT" id="Q39419"/>
<dbReference type="Allergome" id="129">
    <property type="allergen name" value="Bet v 4"/>
</dbReference>
<dbReference type="Allergome" id="3138">
    <property type="allergen name" value="Bet v 4.0101"/>
</dbReference>
<dbReference type="EvolutionaryTrace" id="Q39419"/>
<dbReference type="GO" id="GO:0005509">
    <property type="term" value="F:calcium ion binding"/>
    <property type="evidence" value="ECO:0007669"/>
    <property type="project" value="InterPro"/>
</dbReference>
<dbReference type="CDD" id="cd00051">
    <property type="entry name" value="EFh"/>
    <property type="match status" value="1"/>
</dbReference>
<dbReference type="FunFam" id="1.10.238.10:FF:000003">
    <property type="entry name" value="Calmodulin A"/>
    <property type="match status" value="1"/>
</dbReference>
<dbReference type="Gene3D" id="1.10.238.10">
    <property type="entry name" value="EF-hand"/>
    <property type="match status" value="1"/>
</dbReference>
<dbReference type="InterPro" id="IPR011992">
    <property type="entry name" value="EF-hand-dom_pair"/>
</dbReference>
<dbReference type="InterPro" id="IPR018247">
    <property type="entry name" value="EF_Hand_1_Ca_BS"/>
</dbReference>
<dbReference type="InterPro" id="IPR002048">
    <property type="entry name" value="EF_hand_dom"/>
</dbReference>
<dbReference type="InterPro" id="IPR039647">
    <property type="entry name" value="EF_hand_pair_protein_CML-like"/>
</dbReference>
<dbReference type="PANTHER" id="PTHR10891">
    <property type="entry name" value="EF-HAND CALCIUM-BINDING DOMAIN CONTAINING PROTEIN"/>
    <property type="match status" value="1"/>
</dbReference>
<dbReference type="Pfam" id="PF13499">
    <property type="entry name" value="EF-hand_7"/>
    <property type="match status" value="1"/>
</dbReference>
<dbReference type="SMART" id="SM00054">
    <property type="entry name" value="EFh"/>
    <property type="match status" value="2"/>
</dbReference>
<dbReference type="SUPFAM" id="SSF47473">
    <property type="entry name" value="EF-hand"/>
    <property type="match status" value="1"/>
</dbReference>
<dbReference type="PROSITE" id="PS00018">
    <property type="entry name" value="EF_HAND_1"/>
    <property type="match status" value="2"/>
</dbReference>
<dbReference type="PROSITE" id="PS50222">
    <property type="entry name" value="EF_HAND_2"/>
    <property type="match status" value="2"/>
</dbReference>
<evidence type="ECO:0000255" key="1">
    <source>
        <dbReference type="PROSITE-ProRule" id="PRU00448"/>
    </source>
</evidence>
<evidence type="ECO:0000269" key="2">
    <source>
    </source>
</evidence>
<evidence type="ECO:0000305" key="3"/>
<evidence type="ECO:0007829" key="4">
    <source>
        <dbReference type="PDB" id="1H4B"/>
    </source>
</evidence>
<reference key="1">
    <citation type="journal article" date="1997" name="J. Biol. Chem.">
        <title>Immunological and biological properties of Bet v 4, a novel birch pollen allergen with two EF-hand calcium-binding domains.</title>
        <authorList>
            <person name="Engel E."/>
            <person name="Richter K."/>
            <person name="Obermeyer G."/>
            <person name="Briza P."/>
            <person name="Kungl A.J."/>
            <person name="Simon B."/>
            <person name="Auer M."/>
            <person name="Ebner C."/>
            <person name="Rheinberger H.J."/>
            <person name="Breitenbach M."/>
            <person name="Ferreira F."/>
        </authorList>
    </citation>
    <scope>NUCLEOTIDE SEQUENCE [MRNA]</scope>
    <source>
        <tissue>Pollen</tissue>
    </source>
</reference>
<reference key="2">
    <citation type="journal article" date="1997" name="Biochem. Biophys. Res. Commun.">
        <title>Molecular characterization, expression in Escherichia coli, and epitope analysis of a two EF-hand calcium-binding birch pollen allergen, Bet v 4.</title>
        <authorList>
            <person name="Twardosz A."/>
            <person name="Hayek B."/>
            <person name="Seiberler S."/>
            <person name="Pastore A."/>
            <person name="Vangelista L."/>
            <person name="Groenlund H."/>
            <person name="Kraft D."/>
            <person name="Valenta R."/>
        </authorList>
    </citation>
    <scope>NUCLEOTIDE SEQUENCE [MRNA]</scope>
    <source>
        <tissue>Pollen</tissue>
    </source>
</reference>
<reference key="3">
    <citation type="journal article" date="2004" name="J. Mol. Biol.">
        <title>Solution structure, dynamics, and hydrodynamics of the calcium-bound cross-reactive birch pollen allergen Bet v 4 reveal a canonical monomeric two EF-hand assembly with a regulatory function.</title>
        <authorList>
            <person name="Neudecker P."/>
            <person name="Nerkamp J."/>
            <person name="Eisenmann A."/>
            <person name="Nourse A."/>
            <person name="Lauber T."/>
            <person name="Schweimer K."/>
            <person name="Lehmann K."/>
            <person name="Schwarzinger S."/>
            <person name="Ferreira F."/>
            <person name="Rosch P."/>
        </authorList>
    </citation>
    <scope>STRUCTURE BY NMR OF 2-85</scope>
    <scope>SUBUNIT</scope>
</reference>
<gene>
    <name type="primary">BETV4</name>
</gene>
<accession>Q39419</accession>
<accession>O04131</accession>